<protein>
    <recommendedName>
        <fullName>Cytoplasmic polyadenylation element-binding protein 1</fullName>
        <shortName>CPE-BP1</shortName>
        <shortName>CPE-binding protein 1</shortName>
        <shortName>CPEB-1</shortName>
    </recommendedName>
</protein>
<dbReference type="EMBL" id="CR860287">
    <property type="protein sequence ID" value="CAH92427.1"/>
    <property type="molecule type" value="mRNA"/>
</dbReference>
<dbReference type="RefSeq" id="NP_001126432.1">
    <property type="nucleotide sequence ID" value="NM_001132960.1"/>
</dbReference>
<dbReference type="BMRB" id="Q5R733"/>
<dbReference type="SMR" id="Q5R733"/>
<dbReference type="STRING" id="9601.ENSPPYP00000007800"/>
<dbReference type="GeneID" id="100173415"/>
<dbReference type="KEGG" id="pon:100173415"/>
<dbReference type="CTD" id="64506"/>
<dbReference type="eggNOG" id="KOG0129">
    <property type="taxonomic scope" value="Eukaryota"/>
</dbReference>
<dbReference type="InParanoid" id="Q5R733"/>
<dbReference type="OrthoDB" id="10033548at2759"/>
<dbReference type="Proteomes" id="UP000001595">
    <property type="component" value="Unplaced"/>
</dbReference>
<dbReference type="GO" id="GO:0005737">
    <property type="term" value="C:cytoplasm"/>
    <property type="evidence" value="ECO:0000250"/>
    <property type="project" value="UniProtKB"/>
</dbReference>
<dbReference type="GO" id="GO:0030425">
    <property type="term" value="C:dendrite"/>
    <property type="evidence" value="ECO:0007669"/>
    <property type="project" value="UniProtKB-SubCell"/>
</dbReference>
<dbReference type="GO" id="GO:0016020">
    <property type="term" value="C:membrane"/>
    <property type="evidence" value="ECO:0007669"/>
    <property type="project" value="UniProtKB-SubCell"/>
</dbReference>
<dbReference type="GO" id="GO:0005634">
    <property type="term" value="C:nucleus"/>
    <property type="evidence" value="ECO:0000250"/>
    <property type="project" value="UniProtKB"/>
</dbReference>
<dbReference type="GO" id="GO:0000932">
    <property type="term" value="C:P-body"/>
    <property type="evidence" value="ECO:0007669"/>
    <property type="project" value="UniProtKB-SubCell"/>
</dbReference>
<dbReference type="GO" id="GO:0014069">
    <property type="term" value="C:postsynaptic density"/>
    <property type="evidence" value="ECO:0007669"/>
    <property type="project" value="UniProtKB-SubCell"/>
</dbReference>
<dbReference type="GO" id="GO:1990904">
    <property type="term" value="C:ribonucleoprotein complex"/>
    <property type="evidence" value="ECO:0007669"/>
    <property type="project" value="UniProtKB-KW"/>
</dbReference>
<dbReference type="GO" id="GO:0046872">
    <property type="term" value="F:metal ion binding"/>
    <property type="evidence" value="ECO:0007669"/>
    <property type="project" value="UniProtKB-KW"/>
</dbReference>
<dbReference type="GO" id="GO:0035925">
    <property type="term" value="F:mRNA 3'-UTR AU-rich region binding"/>
    <property type="evidence" value="ECO:0000250"/>
    <property type="project" value="UniProtKB"/>
</dbReference>
<dbReference type="GO" id="GO:0000900">
    <property type="term" value="F:mRNA regulatory element binding translation repressor activity"/>
    <property type="evidence" value="ECO:0000250"/>
    <property type="project" value="UniProtKB"/>
</dbReference>
<dbReference type="GO" id="GO:0043022">
    <property type="term" value="F:ribosome binding"/>
    <property type="evidence" value="ECO:0007669"/>
    <property type="project" value="TreeGrafter"/>
</dbReference>
<dbReference type="GO" id="GO:0008135">
    <property type="term" value="F:translation factor activity, RNA binding"/>
    <property type="evidence" value="ECO:0007669"/>
    <property type="project" value="TreeGrafter"/>
</dbReference>
<dbReference type="GO" id="GO:0071230">
    <property type="term" value="P:cellular response to amino acid stimulus"/>
    <property type="evidence" value="ECO:0000250"/>
    <property type="project" value="UniProtKB"/>
</dbReference>
<dbReference type="GO" id="GO:0071456">
    <property type="term" value="P:cellular response to hypoxia"/>
    <property type="evidence" value="ECO:0000250"/>
    <property type="project" value="UniProtKB"/>
</dbReference>
<dbReference type="GO" id="GO:0032869">
    <property type="term" value="P:cellular response to insulin stimulus"/>
    <property type="evidence" value="ECO:0000250"/>
    <property type="project" value="UniProtKB"/>
</dbReference>
<dbReference type="GO" id="GO:0006397">
    <property type="term" value="P:mRNA processing"/>
    <property type="evidence" value="ECO:0007669"/>
    <property type="project" value="UniProtKB-KW"/>
</dbReference>
<dbReference type="GO" id="GO:2000766">
    <property type="term" value="P:negative regulation of cytoplasmic translation"/>
    <property type="evidence" value="ECO:0000250"/>
    <property type="project" value="UniProtKB"/>
</dbReference>
<dbReference type="GO" id="GO:0031440">
    <property type="term" value="P:regulation of mRNA 3'-end processing"/>
    <property type="evidence" value="ECO:0000250"/>
    <property type="project" value="UniProtKB"/>
</dbReference>
<dbReference type="CDD" id="cd19757">
    <property type="entry name" value="Bbox1"/>
    <property type="match status" value="1"/>
</dbReference>
<dbReference type="CDD" id="cd12723">
    <property type="entry name" value="RRM1_CPEB1"/>
    <property type="match status" value="1"/>
</dbReference>
<dbReference type="CDD" id="cd12725">
    <property type="entry name" value="RRM2_CPEB1"/>
    <property type="match status" value="1"/>
</dbReference>
<dbReference type="FunFam" id="3.30.70.330:FF:000054">
    <property type="entry name" value="Cytoplasmic polyadenylation element-binding protein 1"/>
    <property type="match status" value="1"/>
</dbReference>
<dbReference type="FunFam" id="3.30.70.330:FF:000086">
    <property type="entry name" value="Putative Cytoplasmic polyadenylation element-binding protein 1"/>
    <property type="match status" value="1"/>
</dbReference>
<dbReference type="FunFam" id="4.10.640.40:FF:000002">
    <property type="entry name" value="Putative Cytoplasmic polyadenylation element-binding protein 1"/>
    <property type="match status" value="1"/>
</dbReference>
<dbReference type="Gene3D" id="3.30.70.330">
    <property type="match status" value="2"/>
</dbReference>
<dbReference type="Gene3D" id="4.10.640.40">
    <property type="entry name" value="Cytoplasmic polyadenylation element-binding protein, ZZ domain"/>
    <property type="match status" value="1"/>
</dbReference>
<dbReference type="InterPro" id="IPR032292">
    <property type="entry name" value="CEBP1_N"/>
</dbReference>
<dbReference type="InterPro" id="IPR032296">
    <property type="entry name" value="CEBP_ZZ"/>
</dbReference>
<dbReference type="InterPro" id="IPR038446">
    <property type="entry name" value="CEBP_ZZ_sf"/>
</dbReference>
<dbReference type="InterPro" id="IPR034819">
    <property type="entry name" value="CPEB"/>
</dbReference>
<dbReference type="InterPro" id="IPR034977">
    <property type="entry name" value="CPEB1_RRM1"/>
</dbReference>
<dbReference type="InterPro" id="IPR012677">
    <property type="entry name" value="Nucleotide-bd_a/b_plait_sf"/>
</dbReference>
<dbReference type="InterPro" id="IPR035979">
    <property type="entry name" value="RBD_domain_sf"/>
</dbReference>
<dbReference type="InterPro" id="IPR000504">
    <property type="entry name" value="RRM_dom"/>
</dbReference>
<dbReference type="PANTHER" id="PTHR12566">
    <property type="entry name" value="CYTOPLASMIC POLYADENYLATION ELEMENT BINDING PROTEIN CPEB"/>
    <property type="match status" value="1"/>
</dbReference>
<dbReference type="PANTHER" id="PTHR12566:SF9">
    <property type="entry name" value="CYTOPLASMIC POLYADENYLATION ELEMENT-BINDING PROTEIN 1"/>
    <property type="match status" value="1"/>
</dbReference>
<dbReference type="Pfam" id="PF16368">
    <property type="entry name" value="CEBP1_N"/>
    <property type="match status" value="1"/>
</dbReference>
<dbReference type="Pfam" id="PF16366">
    <property type="entry name" value="CEBP_ZZ"/>
    <property type="match status" value="1"/>
</dbReference>
<dbReference type="Pfam" id="PF16367">
    <property type="entry name" value="RRM_7"/>
    <property type="match status" value="1"/>
</dbReference>
<dbReference type="SUPFAM" id="SSF54928">
    <property type="entry name" value="RNA-binding domain, RBD"/>
    <property type="match status" value="1"/>
</dbReference>
<dbReference type="PROSITE" id="PS50102">
    <property type="entry name" value="RRM"/>
    <property type="match status" value="2"/>
</dbReference>
<gene>
    <name type="primary">CPEB1</name>
</gene>
<sequence>MLFPTSAQESSRGLPDANDLCLGLQSLSLTGWDRPWSTQDSDSSAQSSTHSVLSMLHNPLGNVLGKPPLSFLPLDPLGSDLVDKFPAPSVRGSRLDTRPILDSRSSSPSDSDTSGFSSGSDHLSDLISSLRISPPLPFLSLTGGGPRDPLKMGVGSRMDQEQAALAAVTPSPTSASKRWPGASVWPSWDLLEAPKDPFSIEREARLHRQAAAVNEATCTWSGQLPPRNYKNPIYSCKVFLGGVPWDITEAGLVNTFRVFGSLSVEWPGKDGKHPRCPPKGYVYLVFELEKSVRSLLQACSHDPLSPDGLSEYYFKMSSRRMRCKEVQVIPWVLADSNFVRSPSQRLNPSRTVFVGALHGMLNAEALAAILNDLFGGVVYAGIDTDKHKYPIGSGRVTFNNQRSYLKAVTAAFVEIKTTKFTKKVQIDPYLEDSLCHICSSQPGPFFCRDQVCFKYFCRSCWHWRHSMEGLRHHSPLMRNQKNRDSS</sequence>
<comment type="function">
    <text evidence="2 3">Sequence-specific RNA-binding protein that regulates mRNA cytoplasmic polyadenylation and translation initiation during oocyte maturation, early development and at postsynapse sites of neurons. Binds to the cytoplasmic polyadenylation element (CPE), an uridine-rich sequence element (consensus sequence 5'-UUUUUAU-3') within the mRNA 3'-UTR. In absence of phosphorylation and in association with TACC3 is also involved as a repressor of translation of CPE-containing mRNA; a repression that is relieved by phosphorylation or degradation. Involved in the transport of CPE-containing mRNA to dendrites; those mRNAs may be transported to dendrites in a translationally dormant form and translationally activated at synapses. Its interaction with APLP1 promotes local CPE-containing mRNA polyadenylation and translation activation. Induces the assembly of stress granules in the absence of stress. Required for cell cycle progression, specifically for prophase entry.</text>
</comment>
<comment type="subunit">
    <text evidence="2 3">Interacts with kinesin, dynein, APLP1, APLP2, TENT2/GLD2 and APP. Both phosphorylated and non phosphorylated forms interact with APLP1 (By similarity). Interacts with TENT4B; the interaction is required for TENT4B-mediated translational control (By similarity).</text>
</comment>
<comment type="subcellular location">
    <subcellularLocation>
        <location evidence="1">Cytoplasm</location>
        <location evidence="1">P-body</location>
    </subcellularLocation>
    <subcellularLocation>
        <location evidence="1">Cytoplasmic granule</location>
    </subcellularLocation>
    <subcellularLocation>
        <location evidence="1">Synapse</location>
    </subcellularLocation>
    <subcellularLocation>
        <location evidence="1">Membrane</location>
    </subcellularLocation>
    <subcellularLocation>
        <location evidence="1">Postsynaptic density</location>
    </subcellularLocation>
    <subcellularLocation>
        <location evidence="1">Cell projection</location>
        <location evidence="1">Dendrite</location>
    </subcellularLocation>
    <text evidence="1">Also found in stress granules. Recruited to stress granules (SGs) upon arsenite treatment. In dendrites. Localizes in synaptosomes at dendritic synapses of neurons. Strongly enriched in postsynaptic density (PSD) fractions. Transported into dendrites in a microtubule-dependent fashion and colocalizes in mRNA-containing particles with TACC3, dynein and kinesin. Membrane-associated. Colocalizes at excitatory synapses with members of the polyadenylation and translation complex factors (CPSF, APLP1, TACC3, AURKA, SYP, etc.) including CPE-containing RNAs (By similarity).</text>
</comment>
<comment type="domain">
    <text evidence="3">The 2 RRM domains and the C-terminal region mediate interaction with CPE-containing RNA. The interdomain linker (411-429) acts as a hinge to fix the relative orientation of the 2 RRMs. The ZZ domain (509-566) coordinates 2 Zn ions and is probably implicated in mediating interactions with other proteins in addition to increasing the affinity of the RRMs for the CPEs. A continuous hydrophobic interface is formed between the 2 RRM.</text>
</comment>
<comment type="PTM">
    <text evidence="1">Phosphorylated on serine/threonine residues by AURKA within positions 91 and 122. Phosphorylation and dephosphorylation on Thr-97 regulates cytoplasmic polyadenylation and translation of CPE-containing mRNAs. Phosphorylation on Thr-97 by AURKA and CAMK2A activates CPEB1. Phosphorylation on Thr-97 may be promoted by APLP1. Phosphorylation increases binding to RNA (By similarity).</text>
</comment>
<comment type="similarity">
    <text evidence="6">Belongs to the RRM CPEB family.</text>
</comment>
<feature type="chain" id="PRO_0000269253" description="Cytoplasmic polyadenylation element-binding protein 1">
    <location>
        <begin position="1"/>
        <end position="486"/>
    </location>
</feature>
<feature type="domain" description="RRM 1" evidence="4">
    <location>
        <begin position="236"/>
        <end position="328"/>
    </location>
</feature>
<feature type="domain" description="RRM 2" evidence="4">
    <location>
        <begin position="350"/>
        <end position="431"/>
    </location>
</feature>
<feature type="region of interest" description="Disordered" evidence="5">
    <location>
        <begin position="87"/>
        <end position="120"/>
    </location>
</feature>
<feature type="region of interest" description="Necessary for stress granule assembly and correct localization in dcp1 bodies" evidence="3">
    <location>
        <begin position="255"/>
        <end position="486"/>
    </location>
</feature>
<feature type="compositionally biased region" description="Low complexity" evidence="5">
    <location>
        <begin position="102"/>
        <end position="120"/>
    </location>
</feature>
<feature type="binding site" evidence="3">
    <location>
        <position position="435"/>
    </location>
    <ligand>
        <name>Zn(2+)</name>
        <dbReference type="ChEBI" id="CHEBI:29105"/>
        <label>1</label>
    </ligand>
</feature>
<feature type="binding site" evidence="3">
    <location>
        <position position="438"/>
    </location>
    <ligand>
        <name>Zn(2+)</name>
        <dbReference type="ChEBI" id="CHEBI:29105"/>
        <label>1</label>
    </ligand>
</feature>
<feature type="binding site" evidence="3">
    <location>
        <position position="447"/>
    </location>
    <ligand>
        <name>Zn(2+)</name>
        <dbReference type="ChEBI" id="CHEBI:29105"/>
        <label>2</label>
    </ligand>
</feature>
<feature type="binding site" evidence="3">
    <location>
        <position position="452"/>
    </location>
    <ligand>
        <name>Zn(2+)</name>
        <dbReference type="ChEBI" id="CHEBI:29105"/>
        <label>2</label>
    </ligand>
</feature>
<feature type="binding site" evidence="3">
    <location>
        <position position="457"/>
    </location>
    <ligand>
        <name>Zn(2+)</name>
        <dbReference type="ChEBI" id="CHEBI:29105"/>
        <label>1</label>
    </ligand>
</feature>
<feature type="binding site" evidence="3">
    <location>
        <position position="460"/>
    </location>
    <ligand>
        <name>Zn(2+)</name>
        <dbReference type="ChEBI" id="CHEBI:29105"/>
        <label>1</label>
    </ligand>
</feature>
<feature type="binding site" evidence="3">
    <location>
        <position position="465"/>
    </location>
    <ligand>
        <name>Zn(2+)</name>
        <dbReference type="ChEBI" id="CHEBI:29105"/>
        <label>2</label>
    </ligand>
</feature>
<feature type="binding site" evidence="3">
    <location>
        <position position="473"/>
    </location>
    <ligand>
        <name>Zn(2+)</name>
        <dbReference type="ChEBI" id="CHEBI:29105"/>
        <label>2</label>
    </ligand>
</feature>
<feature type="site" description="Important for the positionning of RRM1 relative to RRM2" evidence="3">
    <location>
        <position position="331"/>
    </location>
</feature>
<feature type="modified residue" description="Phosphothreonine; by AURKA and CAMK2A" evidence="2">
    <location>
        <position position="97"/>
    </location>
</feature>
<accession>Q5R733</accession>
<proteinExistence type="evidence at transcript level"/>
<organism>
    <name type="scientific">Pongo abelii</name>
    <name type="common">Sumatran orangutan</name>
    <name type="synonym">Pongo pygmaeus abelii</name>
    <dbReference type="NCBI Taxonomy" id="9601"/>
    <lineage>
        <taxon>Eukaryota</taxon>
        <taxon>Metazoa</taxon>
        <taxon>Chordata</taxon>
        <taxon>Craniata</taxon>
        <taxon>Vertebrata</taxon>
        <taxon>Euteleostomi</taxon>
        <taxon>Mammalia</taxon>
        <taxon>Eutheria</taxon>
        <taxon>Euarchontoglires</taxon>
        <taxon>Primates</taxon>
        <taxon>Haplorrhini</taxon>
        <taxon>Catarrhini</taxon>
        <taxon>Hominidae</taxon>
        <taxon>Pongo</taxon>
    </lineage>
</organism>
<evidence type="ECO:0000250" key="1"/>
<evidence type="ECO:0000250" key="2">
    <source>
        <dbReference type="UniProtKB" id="P70166"/>
    </source>
</evidence>
<evidence type="ECO:0000250" key="3">
    <source>
        <dbReference type="UniProtKB" id="Q9BZB8"/>
    </source>
</evidence>
<evidence type="ECO:0000255" key="4">
    <source>
        <dbReference type="PROSITE-ProRule" id="PRU00176"/>
    </source>
</evidence>
<evidence type="ECO:0000256" key="5">
    <source>
        <dbReference type="SAM" id="MobiDB-lite"/>
    </source>
</evidence>
<evidence type="ECO:0000305" key="6"/>
<keyword id="KW-0010">Activator</keyword>
<keyword id="KW-0966">Cell projection</keyword>
<keyword id="KW-0963">Cytoplasm</keyword>
<keyword id="KW-0472">Membrane</keyword>
<keyword id="KW-0479">Metal-binding</keyword>
<keyword id="KW-0507">mRNA processing</keyword>
<keyword id="KW-0597">Phosphoprotein</keyword>
<keyword id="KW-1185">Reference proteome</keyword>
<keyword id="KW-0677">Repeat</keyword>
<keyword id="KW-0678">Repressor</keyword>
<keyword id="KW-0687">Ribonucleoprotein</keyword>
<keyword id="KW-0694">RNA-binding</keyword>
<keyword id="KW-0770">Synapse</keyword>
<keyword id="KW-0810">Translation regulation</keyword>
<keyword id="KW-0862">Zinc</keyword>
<name>CPEB1_PONAB</name>
<reference key="1">
    <citation type="submission" date="2004-11" db="EMBL/GenBank/DDBJ databases">
        <authorList>
            <consortium name="The German cDNA consortium"/>
        </authorList>
    </citation>
    <scope>NUCLEOTIDE SEQUENCE [LARGE SCALE MRNA]</scope>
    <source>
        <tissue>Brain cortex</tissue>
    </source>
</reference>